<accession>Q9KPB5</accession>
<reference key="1">
    <citation type="journal article" date="2000" name="Nature">
        <title>DNA sequence of both chromosomes of the cholera pathogen Vibrio cholerae.</title>
        <authorList>
            <person name="Heidelberg J.F."/>
            <person name="Eisen J.A."/>
            <person name="Nelson W.C."/>
            <person name="Clayton R.A."/>
            <person name="Gwinn M.L."/>
            <person name="Dodson R.J."/>
            <person name="Haft D.H."/>
            <person name="Hickey E.K."/>
            <person name="Peterson J.D."/>
            <person name="Umayam L.A."/>
            <person name="Gill S.R."/>
            <person name="Nelson K.E."/>
            <person name="Read T.D."/>
            <person name="Tettelin H."/>
            <person name="Richardson D.L."/>
            <person name="Ermolaeva M.D."/>
            <person name="Vamathevan J.J."/>
            <person name="Bass S."/>
            <person name="Qin H."/>
            <person name="Dragoi I."/>
            <person name="Sellers P."/>
            <person name="McDonald L.A."/>
            <person name="Utterback T.R."/>
            <person name="Fleischmann R.D."/>
            <person name="Nierman W.C."/>
            <person name="White O."/>
            <person name="Salzberg S.L."/>
            <person name="Smith H.O."/>
            <person name="Colwell R.R."/>
            <person name="Mekalanos J.J."/>
            <person name="Venter J.C."/>
            <person name="Fraser C.M."/>
        </authorList>
    </citation>
    <scope>NUCLEOTIDE SEQUENCE [LARGE SCALE GENOMIC DNA]</scope>
    <source>
        <strain>ATCC 39315 / El Tor Inaba N16961</strain>
    </source>
</reference>
<evidence type="ECO:0000255" key="1">
    <source>
        <dbReference type="HAMAP-Rule" id="MF_00279"/>
    </source>
</evidence>
<gene>
    <name evidence="1" type="primary">pdxJ</name>
    <name type="ordered locus">VC_2458</name>
</gene>
<proteinExistence type="inferred from homology"/>
<keyword id="KW-0963">Cytoplasm</keyword>
<keyword id="KW-0664">Pyridoxine biosynthesis</keyword>
<keyword id="KW-1185">Reference proteome</keyword>
<keyword id="KW-0808">Transferase</keyword>
<feature type="chain" id="PRO_0000190135" description="Pyridoxine 5'-phosphate synthase">
    <location>
        <begin position="1"/>
        <end position="243"/>
    </location>
</feature>
<feature type="active site" description="Proton acceptor" evidence="1">
    <location>
        <position position="45"/>
    </location>
</feature>
<feature type="active site" description="Proton acceptor" evidence="1">
    <location>
        <position position="72"/>
    </location>
</feature>
<feature type="active site" description="Proton donor" evidence="1">
    <location>
        <position position="193"/>
    </location>
</feature>
<feature type="binding site" evidence="1">
    <location>
        <position position="9"/>
    </location>
    <ligand>
        <name>3-amino-2-oxopropyl phosphate</name>
        <dbReference type="ChEBI" id="CHEBI:57279"/>
    </ligand>
</feature>
<feature type="binding site" evidence="1">
    <location>
        <begin position="11"/>
        <end position="12"/>
    </location>
    <ligand>
        <name>1-deoxy-D-xylulose 5-phosphate</name>
        <dbReference type="ChEBI" id="CHEBI:57792"/>
    </ligand>
</feature>
<feature type="binding site" evidence="1">
    <location>
        <position position="20"/>
    </location>
    <ligand>
        <name>3-amino-2-oxopropyl phosphate</name>
        <dbReference type="ChEBI" id="CHEBI:57279"/>
    </ligand>
</feature>
<feature type="binding site" evidence="1">
    <location>
        <position position="47"/>
    </location>
    <ligand>
        <name>1-deoxy-D-xylulose 5-phosphate</name>
        <dbReference type="ChEBI" id="CHEBI:57792"/>
    </ligand>
</feature>
<feature type="binding site" evidence="1">
    <location>
        <position position="52"/>
    </location>
    <ligand>
        <name>1-deoxy-D-xylulose 5-phosphate</name>
        <dbReference type="ChEBI" id="CHEBI:57792"/>
    </ligand>
</feature>
<feature type="binding site" evidence="1">
    <location>
        <position position="102"/>
    </location>
    <ligand>
        <name>1-deoxy-D-xylulose 5-phosphate</name>
        <dbReference type="ChEBI" id="CHEBI:57792"/>
    </ligand>
</feature>
<feature type="binding site" evidence="1">
    <location>
        <position position="194"/>
    </location>
    <ligand>
        <name>3-amino-2-oxopropyl phosphate</name>
        <dbReference type="ChEBI" id="CHEBI:57279"/>
    </ligand>
</feature>
<feature type="binding site" evidence="1">
    <location>
        <begin position="215"/>
        <end position="216"/>
    </location>
    <ligand>
        <name>3-amino-2-oxopropyl phosphate</name>
        <dbReference type="ChEBI" id="CHEBI:57279"/>
    </ligand>
</feature>
<feature type="site" description="Transition state stabilizer" evidence="1">
    <location>
        <position position="153"/>
    </location>
</feature>
<comment type="function">
    <text evidence="1">Catalyzes the complicated ring closure reaction between the two acyclic compounds 1-deoxy-D-xylulose-5-phosphate (DXP) and 3-amino-2-oxopropyl phosphate (1-amino-acetone-3-phosphate or AAP) to form pyridoxine 5'-phosphate (PNP) and inorganic phosphate.</text>
</comment>
<comment type="catalytic activity">
    <reaction evidence="1">
        <text>3-amino-2-oxopropyl phosphate + 1-deoxy-D-xylulose 5-phosphate = pyridoxine 5'-phosphate + phosphate + 2 H2O + H(+)</text>
        <dbReference type="Rhea" id="RHEA:15265"/>
        <dbReference type="ChEBI" id="CHEBI:15377"/>
        <dbReference type="ChEBI" id="CHEBI:15378"/>
        <dbReference type="ChEBI" id="CHEBI:43474"/>
        <dbReference type="ChEBI" id="CHEBI:57279"/>
        <dbReference type="ChEBI" id="CHEBI:57792"/>
        <dbReference type="ChEBI" id="CHEBI:58589"/>
        <dbReference type="EC" id="2.6.99.2"/>
    </reaction>
</comment>
<comment type="pathway">
    <text evidence="1">Cofactor biosynthesis; pyridoxine 5'-phosphate biosynthesis; pyridoxine 5'-phosphate from D-erythrose 4-phosphate: step 5/5.</text>
</comment>
<comment type="subunit">
    <text evidence="1">Homooctamer; tetramer of dimers.</text>
</comment>
<comment type="subcellular location">
    <subcellularLocation>
        <location evidence="1">Cytoplasm</location>
    </subcellularLocation>
</comment>
<comment type="similarity">
    <text evidence="1">Belongs to the PNP synthase family.</text>
</comment>
<protein>
    <recommendedName>
        <fullName evidence="1">Pyridoxine 5'-phosphate synthase</fullName>
        <shortName evidence="1">PNP synthase</shortName>
        <ecNumber evidence="1">2.6.99.2</ecNumber>
    </recommendedName>
</protein>
<organism>
    <name type="scientific">Vibrio cholerae serotype O1 (strain ATCC 39315 / El Tor Inaba N16961)</name>
    <dbReference type="NCBI Taxonomy" id="243277"/>
    <lineage>
        <taxon>Bacteria</taxon>
        <taxon>Pseudomonadati</taxon>
        <taxon>Pseudomonadota</taxon>
        <taxon>Gammaproteobacteria</taxon>
        <taxon>Vibrionales</taxon>
        <taxon>Vibrionaceae</taxon>
        <taxon>Vibrio</taxon>
    </lineage>
</organism>
<name>PDXJ_VIBCH</name>
<sequence>MSSIYLGVNIDHVATLRNARGTQYPDPVHAAEIAERAGADGITIHLREDRRHITDRDVRILRETLQTRMNLEMAVTDEMVEIALQTQPEYVCLVPEKREELTTEGGLDVLGQLERVKAATEKLTAAGIKVSLFIDADREQIDAAKACGAPFIELHTGHYSDAKSDVDQQNELKKIAAAAAYAHDLGITVNAGHGLTYHNVAAIAAIPEIYELNIGHAIIGRAVFDGLAKAVADMKAIMVAARR</sequence>
<dbReference type="EC" id="2.6.99.2" evidence="1"/>
<dbReference type="EMBL" id="AE003852">
    <property type="protein sequence ID" value="AAF95600.1"/>
    <property type="molecule type" value="Genomic_DNA"/>
</dbReference>
<dbReference type="PIR" id="G82072">
    <property type="entry name" value="G82072"/>
</dbReference>
<dbReference type="RefSeq" id="NP_232087.1">
    <property type="nucleotide sequence ID" value="NC_002505.1"/>
</dbReference>
<dbReference type="RefSeq" id="WP_000095364.1">
    <property type="nucleotide sequence ID" value="NZ_LT906614.1"/>
</dbReference>
<dbReference type="SMR" id="Q9KPB5"/>
<dbReference type="STRING" id="243277.VC_2458"/>
<dbReference type="DNASU" id="2613000"/>
<dbReference type="EnsemblBacteria" id="AAF95600">
    <property type="protein sequence ID" value="AAF95600"/>
    <property type="gene ID" value="VC_2458"/>
</dbReference>
<dbReference type="GeneID" id="88783268"/>
<dbReference type="KEGG" id="vch:VC_2458"/>
<dbReference type="PATRIC" id="fig|243277.26.peg.2343"/>
<dbReference type="eggNOG" id="COG0854">
    <property type="taxonomic scope" value="Bacteria"/>
</dbReference>
<dbReference type="HOGENOM" id="CLU_074563_0_0_6"/>
<dbReference type="UniPathway" id="UPA00244">
    <property type="reaction ID" value="UER00313"/>
</dbReference>
<dbReference type="Proteomes" id="UP000000584">
    <property type="component" value="Chromosome 1"/>
</dbReference>
<dbReference type="GO" id="GO:0005829">
    <property type="term" value="C:cytosol"/>
    <property type="evidence" value="ECO:0000318"/>
    <property type="project" value="GO_Central"/>
</dbReference>
<dbReference type="GO" id="GO:0033856">
    <property type="term" value="F:pyridoxine 5'-phosphate synthase activity"/>
    <property type="evidence" value="ECO:0000318"/>
    <property type="project" value="GO_Central"/>
</dbReference>
<dbReference type="GO" id="GO:0008615">
    <property type="term" value="P:pyridoxine biosynthetic process"/>
    <property type="evidence" value="ECO:0000318"/>
    <property type="project" value="GO_Central"/>
</dbReference>
<dbReference type="CDD" id="cd00003">
    <property type="entry name" value="PNPsynthase"/>
    <property type="match status" value="1"/>
</dbReference>
<dbReference type="FunFam" id="3.20.20.70:FF:000042">
    <property type="entry name" value="Pyridoxine 5'-phosphate synthase"/>
    <property type="match status" value="1"/>
</dbReference>
<dbReference type="Gene3D" id="3.20.20.70">
    <property type="entry name" value="Aldolase class I"/>
    <property type="match status" value="1"/>
</dbReference>
<dbReference type="HAMAP" id="MF_00279">
    <property type="entry name" value="PdxJ"/>
    <property type="match status" value="1"/>
</dbReference>
<dbReference type="InterPro" id="IPR013785">
    <property type="entry name" value="Aldolase_TIM"/>
</dbReference>
<dbReference type="InterPro" id="IPR004569">
    <property type="entry name" value="PyrdxlP_synth_PdxJ"/>
</dbReference>
<dbReference type="InterPro" id="IPR036130">
    <property type="entry name" value="Pyridoxine-5'_phos_synth"/>
</dbReference>
<dbReference type="NCBIfam" id="TIGR00559">
    <property type="entry name" value="pdxJ"/>
    <property type="match status" value="1"/>
</dbReference>
<dbReference type="NCBIfam" id="NF003623">
    <property type="entry name" value="PRK05265.1-1"/>
    <property type="match status" value="1"/>
</dbReference>
<dbReference type="NCBIfam" id="NF003624">
    <property type="entry name" value="PRK05265.1-2"/>
    <property type="match status" value="1"/>
</dbReference>
<dbReference type="NCBIfam" id="NF003625">
    <property type="entry name" value="PRK05265.1-3"/>
    <property type="match status" value="1"/>
</dbReference>
<dbReference type="NCBIfam" id="NF003627">
    <property type="entry name" value="PRK05265.1-5"/>
    <property type="match status" value="1"/>
</dbReference>
<dbReference type="PANTHER" id="PTHR30456">
    <property type="entry name" value="PYRIDOXINE 5'-PHOSPHATE SYNTHASE"/>
    <property type="match status" value="1"/>
</dbReference>
<dbReference type="PANTHER" id="PTHR30456:SF0">
    <property type="entry name" value="PYRIDOXINE 5'-PHOSPHATE SYNTHASE"/>
    <property type="match status" value="1"/>
</dbReference>
<dbReference type="Pfam" id="PF03740">
    <property type="entry name" value="PdxJ"/>
    <property type="match status" value="1"/>
</dbReference>
<dbReference type="SUPFAM" id="SSF63892">
    <property type="entry name" value="Pyridoxine 5'-phosphate synthase"/>
    <property type="match status" value="1"/>
</dbReference>